<feature type="chain" id="PRO_0000458962" description="E3 ubiquitin-protein ligase Fancl">
    <location>
        <begin position="1"/>
        <end position="381"/>
    </location>
</feature>
<feature type="zinc finger region" description="RING-CH-type; degenerate" evidence="1">
    <location>
        <begin position="303"/>
        <end position="374"/>
    </location>
</feature>
<feature type="region of interest" description="UBC-RWD region (URD)" evidence="7">
    <location>
        <begin position="110"/>
        <end position="293"/>
    </location>
</feature>
<feature type="binding site" evidence="1 3 11">
    <location>
        <position position="311"/>
    </location>
    <ligand>
        <name>Zn(2+)</name>
        <dbReference type="ChEBI" id="CHEBI:29105"/>
        <label>1</label>
    </ligand>
</feature>
<feature type="binding site" evidence="1 3 11">
    <location>
        <position position="314"/>
    </location>
    <ligand>
        <name>Zn(2+)</name>
        <dbReference type="ChEBI" id="CHEBI:29105"/>
        <label>1</label>
    </ligand>
</feature>
<feature type="binding site" evidence="3 11">
    <location>
        <position position="329"/>
    </location>
    <ligand>
        <name>Zn(2+)</name>
        <dbReference type="ChEBI" id="CHEBI:29105"/>
        <label>2</label>
    </ligand>
</feature>
<feature type="binding site" evidence="3 11">
    <location>
        <position position="334"/>
    </location>
    <ligand>
        <name>Zn(2+)</name>
        <dbReference type="ChEBI" id="CHEBI:29105"/>
        <label>2</label>
    </ligand>
</feature>
<feature type="binding site" evidence="1 3 11">
    <location>
        <position position="339"/>
    </location>
    <ligand>
        <name>Zn(2+)</name>
        <dbReference type="ChEBI" id="CHEBI:29105"/>
        <label>1</label>
    </ligand>
</feature>
<feature type="binding site" evidence="1 3 11">
    <location>
        <position position="342"/>
    </location>
    <ligand>
        <name>Zn(2+)</name>
        <dbReference type="ChEBI" id="CHEBI:29105"/>
        <label>1</label>
    </ligand>
</feature>
<feature type="binding site" evidence="3 11">
    <location>
        <position position="364"/>
    </location>
    <ligand>
        <name>Zn(2+)</name>
        <dbReference type="ChEBI" id="CHEBI:29105"/>
        <label>2</label>
    </ligand>
</feature>
<feature type="binding site" evidence="3 11">
    <location>
        <position position="367"/>
    </location>
    <ligand>
        <name>Zn(2+)</name>
        <dbReference type="ChEBI" id="CHEBI:29105"/>
        <label>2</label>
    </ligand>
</feature>
<feature type="splice variant" id="VSP_062011" description="In isoform B." evidence="7">
    <location>
        <position position="370"/>
    </location>
</feature>
<feature type="helix" evidence="12">
    <location>
        <begin position="7"/>
        <end position="14"/>
    </location>
</feature>
<feature type="strand" evidence="12">
    <location>
        <begin position="18"/>
        <end position="22"/>
    </location>
</feature>
<feature type="strand" evidence="12">
    <location>
        <begin position="28"/>
        <end position="36"/>
    </location>
</feature>
<feature type="strand" evidence="12">
    <location>
        <begin position="39"/>
        <end position="47"/>
    </location>
</feature>
<feature type="strand" evidence="12">
    <location>
        <begin position="57"/>
        <end position="61"/>
    </location>
</feature>
<feature type="strand" evidence="12">
    <location>
        <begin position="63"/>
        <end position="69"/>
    </location>
</feature>
<feature type="turn" evidence="12">
    <location>
        <begin position="71"/>
        <end position="73"/>
    </location>
</feature>
<feature type="helix" evidence="12">
    <location>
        <begin position="82"/>
        <end position="92"/>
    </location>
</feature>
<feature type="helix" evidence="12">
    <location>
        <begin position="111"/>
        <end position="119"/>
    </location>
</feature>
<feature type="strand" evidence="12">
    <location>
        <begin position="125"/>
        <end position="128"/>
    </location>
</feature>
<feature type="helix" evidence="12">
    <location>
        <begin position="130"/>
        <end position="132"/>
    </location>
</feature>
<feature type="strand" evidence="12">
    <location>
        <begin position="134"/>
        <end position="140"/>
    </location>
</feature>
<feature type="strand" evidence="12">
    <location>
        <begin position="143"/>
        <end position="151"/>
    </location>
</feature>
<feature type="turn" evidence="12">
    <location>
        <begin position="152"/>
        <end position="154"/>
    </location>
</feature>
<feature type="strand" evidence="12">
    <location>
        <begin position="157"/>
        <end position="162"/>
    </location>
</feature>
<feature type="helix" evidence="12">
    <location>
        <begin position="168"/>
        <end position="175"/>
    </location>
</feature>
<feature type="helix" evidence="12">
    <location>
        <begin position="179"/>
        <end position="192"/>
    </location>
</feature>
<feature type="helix" evidence="12">
    <location>
        <begin position="194"/>
        <end position="206"/>
    </location>
</feature>
<feature type="strand" evidence="12">
    <location>
        <begin position="211"/>
        <end position="214"/>
    </location>
</feature>
<feature type="strand" evidence="12">
    <location>
        <begin position="221"/>
        <end position="227"/>
    </location>
</feature>
<feature type="strand" evidence="12">
    <location>
        <begin position="230"/>
        <end position="237"/>
    </location>
</feature>
<feature type="turn" evidence="12">
    <location>
        <begin position="242"/>
        <end position="245"/>
    </location>
</feature>
<feature type="strand" evidence="12">
    <location>
        <begin position="246"/>
        <end position="253"/>
    </location>
</feature>
<feature type="helix" evidence="12">
    <location>
        <begin position="254"/>
        <end position="269"/>
    </location>
</feature>
<feature type="helix" evidence="12">
    <location>
        <begin position="277"/>
        <end position="284"/>
    </location>
</feature>
<feature type="helix" evidence="12">
    <location>
        <begin position="295"/>
        <end position="297"/>
    </location>
</feature>
<feature type="strand" evidence="12">
    <location>
        <begin position="312"/>
        <end position="314"/>
    </location>
</feature>
<feature type="helix" evidence="12">
    <location>
        <begin position="341"/>
        <end position="343"/>
    </location>
</feature>
<feature type="helix" evidence="12">
    <location>
        <begin position="344"/>
        <end position="351"/>
    </location>
</feature>
<feature type="strand" evidence="12">
    <location>
        <begin position="352"/>
        <end position="354"/>
    </location>
</feature>
<feature type="turn" evidence="12">
    <location>
        <begin position="356"/>
        <end position="358"/>
    </location>
</feature>
<feature type="strand" evidence="12">
    <location>
        <begin position="361"/>
        <end position="363"/>
    </location>
</feature>
<feature type="turn" evidence="12">
    <location>
        <begin position="365"/>
        <end position="367"/>
    </location>
</feature>
<feature type="strand" evidence="12">
    <location>
        <begin position="370"/>
        <end position="372"/>
    </location>
</feature>
<feature type="helix" evidence="12">
    <location>
        <begin position="373"/>
        <end position="378"/>
    </location>
</feature>
<keyword id="KW-0002">3D-structure</keyword>
<keyword id="KW-0025">Alternative splicing</keyword>
<keyword id="KW-0227">DNA damage</keyword>
<keyword id="KW-0234">DNA repair</keyword>
<keyword id="KW-0479">Metal-binding</keyword>
<keyword id="KW-0539">Nucleus</keyword>
<keyword id="KW-1185">Reference proteome</keyword>
<keyword id="KW-0808">Transferase</keyword>
<keyword id="KW-0833">Ubl conjugation pathway</keyword>
<keyword id="KW-0862">Zinc</keyword>
<keyword id="KW-0863">Zinc-finger</keyword>
<gene>
    <name evidence="9" type="primary">Fancl</name>
    <name evidence="5" type="synonym">FAL</name>
    <name evidence="9" type="ORF">CG12812</name>
</gene>
<dbReference type="EC" id="2.3.2.27" evidence="2"/>
<dbReference type="EMBL" id="AE014297">
    <property type="protein sequence ID" value="AAF54486.2"/>
    <property type="molecule type" value="Genomic_DNA"/>
</dbReference>
<dbReference type="EMBL" id="AE014297">
    <property type="protein sequence ID" value="AHN57265.1"/>
    <property type="molecule type" value="Genomic_DNA"/>
</dbReference>
<dbReference type="EMBL" id="AY075174">
    <property type="protein sequence ID" value="AAL68044.1"/>
    <property type="molecule type" value="mRNA"/>
</dbReference>
<dbReference type="RefSeq" id="NP_001287266.1">
    <molecule id="Q8T913-2"/>
    <property type="nucleotide sequence ID" value="NM_001300337.1"/>
</dbReference>
<dbReference type="RefSeq" id="NP_649974.1">
    <molecule id="Q8T913-1"/>
    <property type="nucleotide sequence ID" value="NM_141717.3"/>
</dbReference>
<dbReference type="PDB" id="3K1L">
    <property type="method" value="X-ray"/>
    <property type="resolution" value="3.20 A"/>
    <property type="chains" value="A/B=1-381"/>
</dbReference>
<dbReference type="PDBsum" id="3K1L"/>
<dbReference type="SMR" id="Q8T913"/>
<dbReference type="DIP" id="DIP-17903N"/>
<dbReference type="FunCoup" id="Q8T913">
    <property type="interactions" value="619"/>
</dbReference>
<dbReference type="IntAct" id="Q8T913">
    <property type="interactions" value="7"/>
</dbReference>
<dbReference type="STRING" id="7227.FBpp0081681"/>
<dbReference type="GlyGen" id="Q8T913">
    <property type="glycosylation" value="1 site"/>
</dbReference>
<dbReference type="PaxDb" id="7227-FBpp0081681"/>
<dbReference type="DNASU" id="41231"/>
<dbReference type="EnsemblMetazoa" id="FBtr0082203">
    <molecule id="Q8T913-1"/>
    <property type="protein sequence ID" value="FBpp0081681"/>
    <property type="gene ID" value="FBgn0037781"/>
</dbReference>
<dbReference type="EnsemblMetazoa" id="FBtr0344304">
    <molecule id="Q8T913-2"/>
    <property type="protein sequence ID" value="FBpp0310705"/>
    <property type="gene ID" value="FBgn0037781"/>
</dbReference>
<dbReference type="GeneID" id="41231"/>
<dbReference type="KEGG" id="dme:Dmel_CG12812"/>
<dbReference type="UCSC" id="CG12812-RA">
    <molecule id="Q8T913-1"/>
    <property type="organism name" value="d. melanogaster"/>
</dbReference>
<dbReference type="AGR" id="FB:FBgn0037781"/>
<dbReference type="CTD" id="55120"/>
<dbReference type="FlyBase" id="FBgn0037781">
    <property type="gene designation" value="Fancl"/>
</dbReference>
<dbReference type="VEuPathDB" id="VectorBase:FBgn0037781"/>
<dbReference type="eggNOG" id="KOG3268">
    <property type="taxonomic scope" value="Eukaryota"/>
</dbReference>
<dbReference type="GeneTree" id="ENSGT00390000005537"/>
<dbReference type="HOGENOM" id="CLU_757049_0_0_1"/>
<dbReference type="InParanoid" id="Q8T913"/>
<dbReference type="OMA" id="GLCPFCK"/>
<dbReference type="OrthoDB" id="10263265at2759"/>
<dbReference type="UniPathway" id="UPA00143"/>
<dbReference type="BioGRID-ORCS" id="41231">
    <property type="hits" value="0 hits in 1 CRISPR screen"/>
</dbReference>
<dbReference type="EvolutionaryTrace" id="Q8T913"/>
<dbReference type="GenomeRNAi" id="41231"/>
<dbReference type="PRO" id="PR:Q8T913"/>
<dbReference type="Proteomes" id="UP000000803">
    <property type="component" value="Chromosome 3R"/>
</dbReference>
<dbReference type="Bgee" id="FBgn0037781">
    <property type="expression patterns" value="Expressed in midgut large flat cell (Drosophila) in digestive tract and 26 other cell types or tissues"/>
</dbReference>
<dbReference type="ExpressionAtlas" id="Q8T913">
    <property type="expression patterns" value="baseline and differential"/>
</dbReference>
<dbReference type="GO" id="GO:0043240">
    <property type="term" value="C:Fanconi anaemia nuclear complex"/>
    <property type="evidence" value="ECO:0007669"/>
    <property type="project" value="InterPro"/>
</dbReference>
<dbReference type="GO" id="GO:0005634">
    <property type="term" value="C:nucleus"/>
    <property type="evidence" value="ECO:0000318"/>
    <property type="project" value="GO_Central"/>
</dbReference>
<dbReference type="GO" id="GO:0061630">
    <property type="term" value="F:ubiquitin protein ligase activity"/>
    <property type="evidence" value="ECO:0000250"/>
    <property type="project" value="FlyBase"/>
</dbReference>
<dbReference type="GO" id="GO:0008270">
    <property type="term" value="F:zinc ion binding"/>
    <property type="evidence" value="ECO:0007669"/>
    <property type="project" value="UniProtKB-KW"/>
</dbReference>
<dbReference type="GO" id="GO:0006281">
    <property type="term" value="P:DNA repair"/>
    <property type="evidence" value="ECO:0000315"/>
    <property type="project" value="FlyBase"/>
</dbReference>
<dbReference type="GO" id="GO:0036297">
    <property type="term" value="P:interstrand cross-link repair"/>
    <property type="evidence" value="ECO:0007669"/>
    <property type="project" value="InterPro"/>
</dbReference>
<dbReference type="GO" id="GO:0006513">
    <property type="term" value="P:protein monoubiquitination"/>
    <property type="evidence" value="ECO:0000315"/>
    <property type="project" value="FlyBase"/>
</dbReference>
<dbReference type="CDD" id="cd23785">
    <property type="entry name" value="DRWD-C_DmFANCL"/>
    <property type="match status" value="1"/>
</dbReference>
<dbReference type="CDD" id="cd22891">
    <property type="entry name" value="DRWD-N_DmFANCL"/>
    <property type="match status" value="1"/>
</dbReference>
<dbReference type="CDD" id="cd23786">
    <property type="entry name" value="ELF_FANCL"/>
    <property type="match status" value="1"/>
</dbReference>
<dbReference type="CDD" id="cd16490">
    <property type="entry name" value="RING-CH-C4HC3_FANCL"/>
    <property type="match status" value="1"/>
</dbReference>
<dbReference type="FunFam" id="3.30.457.40:FF:000001">
    <property type="entry name" value="AT07283p"/>
    <property type="match status" value="1"/>
</dbReference>
<dbReference type="FunFam" id="3.30.40.10:FF:001375">
    <property type="entry name" value="Fancl, isoform B"/>
    <property type="match status" value="1"/>
</dbReference>
<dbReference type="Gene3D" id="3.30.457.30">
    <property type="match status" value="1"/>
</dbReference>
<dbReference type="Gene3D" id="3.30.457.40">
    <property type="match status" value="1"/>
</dbReference>
<dbReference type="Gene3D" id="3.10.110.20">
    <property type="entry name" value="RWD domain-like"/>
    <property type="match status" value="1"/>
</dbReference>
<dbReference type="Gene3D" id="3.30.40.10">
    <property type="entry name" value="Zinc/RING finger domain, C3HC4 (zinc finger)"/>
    <property type="match status" value="1"/>
</dbReference>
<dbReference type="InterPro" id="IPR026848">
    <property type="entry name" value="Fancl"/>
</dbReference>
<dbReference type="InterPro" id="IPR026850">
    <property type="entry name" value="FANCL_C"/>
</dbReference>
<dbReference type="InterPro" id="IPR043898">
    <property type="entry name" value="FANCL_d2"/>
</dbReference>
<dbReference type="InterPro" id="IPR044037">
    <property type="entry name" value="FANCL_d3"/>
</dbReference>
<dbReference type="InterPro" id="IPR043003">
    <property type="entry name" value="FANCL_d3_sf"/>
</dbReference>
<dbReference type="InterPro" id="IPR019162">
    <property type="entry name" value="FancL_WD-rpt_cont_dom"/>
</dbReference>
<dbReference type="InterPro" id="IPR013083">
    <property type="entry name" value="Znf_RING/FYVE/PHD"/>
</dbReference>
<dbReference type="PANTHER" id="PTHR13206:SF0">
    <property type="entry name" value="E3 UBIQUITIN-PROTEIN LIGASE FANCL"/>
    <property type="match status" value="1"/>
</dbReference>
<dbReference type="PANTHER" id="PTHR13206">
    <property type="entry name" value="UBIQUITIN LIGASE PROTEIN PHF9 FANCONI ANEMIA GROUP L PROTEIN"/>
    <property type="match status" value="1"/>
</dbReference>
<dbReference type="Pfam" id="PF11793">
    <property type="entry name" value="FANCL_C"/>
    <property type="match status" value="1"/>
</dbReference>
<dbReference type="Pfam" id="PF09765">
    <property type="entry name" value="FANCL_d1"/>
    <property type="match status" value="1"/>
</dbReference>
<dbReference type="Pfam" id="PF18890">
    <property type="entry name" value="FANCL_d2"/>
    <property type="match status" value="1"/>
</dbReference>
<dbReference type="Pfam" id="PF18891">
    <property type="entry name" value="FANCL_d3"/>
    <property type="match status" value="1"/>
</dbReference>
<dbReference type="SMART" id="SM01197">
    <property type="entry name" value="FANCL_C"/>
    <property type="match status" value="1"/>
</dbReference>
<sequence>MESNEDVERLLCQKYPGLAAELQPSGACIIRGVLGSEDTWRRLKLYLPHHPALHGFQLYVQESLEYKLYTSANLKLQDDWLLEDFLDHLPKILPAQKAPTVPKELCREGNIYYDILALYKSNEYCLQVDEACSMIRFSEFTDFEQHYLELKIPSLLLLDHSLPDCVSLGEMLTKSAGNLEEALNLFRKLLEDLRPFYDNFMDIDELCHVLQPSPISSKHKTRLFPLKDRVYLKLTIADPFACIASMSLKIIGPTEEVARLRHVLSDGLSNWDSEMNIHKNLLRMFDLCYFPMPDWSDGPKLDEEDNEELRCNICFAYRLDGGEVPLVSCDNAKCVLKCHAVCLEEWFKTLMDGKTFLEVSFGQCPFCKAKLSTSFAALLND</sequence>
<reference evidence="10" key="1">
    <citation type="journal article" date="2000" name="Science">
        <title>The genome sequence of Drosophila melanogaster.</title>
        <authorList>
            <person name="Adams M.D."/>
            <person name="Celniker S.E."/>
            <person name="Holt R.A."/>
            <person name="Evans C.A."/>
            <person name="Gocayne J.D."/>
            <person name="Amanatides P.G."/>
            <person name="Scherer S.E."/>
            <person name="Li P.W."/>
            <person name="Hoskins R.A."/>
            <person name="Galle R.F."/>
            <person name="George R.A."/>
            <person name="Lewis S.E."/>
            <person name="Richards S."/>
            <person name="Ashburner M."/>
            <person name="Henderson S.N."/>
            <person name="Sutton G.G."/>
            <person name="Wortman J.R."/>
            <person name="Yandell M.D."/>
            <person name="Zhang Q."/>
            <person name="Chen L.X."/>
            <person name="Brandon R.C."/>
            <person name="Rogers Y.-H.C."/>
            <person name="Blazej R.G."/>
            <person name="Champe M."/>
            <person name="Pfeiffer B.D."/>
            <person name="Wan K.H."/>
            <person name="Doyle C."/>
            <person name="Baxter E.G."/>
            <person name="Helt G."/>
            <person name="Nelson C.R."/>
            <person name="Miklos G.L.G."/>
            <person name="Abril J.F."/>
            <person name="Agbayani A."/>
            <person name="An H.-J."/>
            <person name="Andrews-Pfannkoch C."/>
            <person name="Baldwin D."/>
            <person name="Ballew R.M."/>
            <person name="Basu A."/>
            <person name="Baxendale J."/>
            <person name="Bayraktaroglu L."/>
            <person name="Beasley E.M."/>
            <person name="Beeson K.Y."/>
            <person name="Benos P.V."/>
            <person name="Berman B.P."/>
            <person name="Bhandari D."/>
            <person name="Bolshakov S."/>
            <person name="Borkova D."/>
            <person name="Botchan M.R."/>
            <person name="Bouck J."/>
            <person name="Brokstein P."/>
            <person name="Brottier P."/>
            <person name="Burtis K.C."/>
            <person name="Busam D.A."/>
            <person name="Butler H."/>
            <person name="Cadieu E."/>
            <person name="Center A."/>
            <person name="Chandra I."/>
            <person name="Cherry J.M."/>
            <person name="Cawley S."/>
            <person name="Dahlke C."/>
            <person name="Davenport L.B."/>
            <person name="Davies P."/>
            <person name="de Pablos B."/>
            <person name="Delcher A."/>
            <person name="Deng Z."/>
            <person name="Mays A.D."/>
            <person name="Dew I."/>
            <person name="Dietz S.M."/>
            <person name="Dodson K."/>
            <person name="Doup L.E."/>
            <person name="Downes M."/>
            <person name="Dugan-Rocha S."/>
            <person name="Dunkov B.C."/>
            <person name="Dunn P."/>
            <person name="Durbin K.J."/>
            <person name="Evangelista C.C."/>
            <person name="Ferraz C."/>
            <person name="Ferriera S."/>
            <person name="Fleischmann W."/>
            <person name="Fosler C."/>
            <person name="Gabrielian A.E."/>
            <person name="Garg N.S."/>
            <person name="Gelbart W.M."/>
            <person name="Glasser K."/>
            <person name="Glodek A."/>
            <person name="Gong F."/>
            <person name="Gorrell J.H."/>
            <person name="Gu Z."/>
            <person name="Guan P."/>
            <person name="Harris M."/>
            <person name="Harris N.L."/>
            <person name="Harvey D.A."/>
            <person name="Heiman T.J."/>
            <person name="Hernandez J.R."/>
            <person name="Houck J."/>
            <person name="Hostin D."/>
            <person name="Houston K.A."/>
            <person name="Howland T.J."/>
            <person name="Wei M.-H."/>
            <person name="Ibegwam C."/>
            <person name="Jalali M."/>
            <person name="Kalush F."/>
            <person name="Karpen G.H."/>
            <person name="Ke Z."/>
            <person name="Kennison J.A."/>
            <person name="Ketchum K.A."/>
            <person name="Kimmel B.E."/>
            <person name="Kodira C.D."/>
            <person name="Kraft C.L."/>
            <person name="Kravitz S."/>
            <person name="Kulp D."/>
            <person name="Lai Z."/>
            <person name="Lasko P."/>
            <person name="Lei Y."/>
            <person name="Levitsky A.A."/>
            <person name="Li J.H."/>
            <person name="Li Z."/>
            <person name="Liang Y."/>
            <person name="Lin X."/>
            <person name="Liu X."/>
            <person name="Mattei B."/>
            <person name="McIntosh T.C."/>
            <person name="McLeod M.P."/>
            <person name="McPherson D."/>
            <person name="Merkulov G."/>
            <person name="Milshina N.V."/>
            <person name="Mobarry C."/>
            <person name="Morris J."/>
            <person name="Moshrefi A."/>
            <person name="Mount S.M."/>
            <person name="Moy M."/>
            <person name="Murphy B."/>
            <person name="Murphy L."/>
            <person name="Muzny D.M."/>
            <person name="Nelson D.L."/>
            <person name="Nelson D.R."/>
            <person name="Nelson K.A."/>
            <person name="Nixon K."/>
            <person name="Nusskern D.R."/>
            <person name="Pacleb J.M."/>
            <person name="Palazzolo M."/>
            <person name="Pittman G.S."/>
            <person name="Pan S."/>
            <person name="Pollard J."/>
            <person name="Puri V."/>
            <person name="Reese M.G."/>
            <person name="Reinert K."/>
            <person name="Remington K."/>
            <person name="Saunders R.D.C."/>
            <person name="Scheeler F."/>
            <person name="Shen H."/>
            <person name="Shue B.C."/>
            <person name="Siden-Kiamos I."/>
            <person name="Simpson M."/>
            <person name="Skupski M.P."/>
            <person name="Smith T.J."/>
            <person name="Spier E."/>
            <person name="Spradling A.C."/>
            <person name="Stapleton M."/>
            <person name="Strong R."/>
            <person name="Sun E."/>
            <person name="Svirskas R."/>
            <person name="Tector C."/>
            <person name="Turner R."/>
            <person name="Venter E."/>
            <person name="Wang A.H."/>
            <person name="Wang X."/>
            <person name="Wang Z.-Y."/>
            <person name="Wassarman D.A."/>
            <person name="Weinstock G.M."/>
            <person name="Weissenbach J."/>
            <person name="Williams S.M."/>
            <person name="Woodage T."/>
            <person name="Worley K.C."/>
            <person name="Wu D."/>
            <person name="Yang S."/>
            <person name="Yao Q.A."/>
            <person name="Ye J."/>
            <person name="Yeh R.-F."/>
            <person name="Zaveri J.S."/>
            <person name="Zhan M."/>
            <person name="Zhang G."/>
            <person name="Zhao Q."/>
            <person name="Zheng L."/>
            <person name="Zheng X.H."/>
            <person name="Zhong F.N."/>
            <person name="Zhong W."/>
            <person name="Zhou X."/>
            <person name="Zhu S.C."/>
            <person name="Zhu X."/>
            <person name="Smith H.O."/>
            <person name="Gibbs R.A."/>
            <person name="Myers E.W."/>
            <person name="Rubin G.M."/>
            <person name="Venter J.C."/>
        </authorList>
    </citation>
    <scope>NUCLEOTIDE SEQUENCE [LARGE SCALE GENOMIC DNA]</scope>
    <source>
        <strain evidence="10">Berkeley</strain>
    </source>
</reference>
<reference evidence="10" key="2">
    <citation type="journal article" date="2002" name="Genome Biol.">
        <title>Annotation of the Drosophila melanogaster euchromatic genome: a systematic review.</title>
        <authorList>
            <person name="Misra S."/>
            <person name="Crosby M.A."/>
            <person name="Mungall C.J."/>
            <person name="Matthews B.B."/>
            <person name="Campbell K.S."/>
            <person name="Hradecky P."/>
            <person name="Huang Y."/>
            <person name="Kaminker J.S."/>
            <person name="Millburn G.H."/>
            <person name="Prochnik S.E."/>
            <person name="Smith C.D."/>
            <person name="Tupy J.L."/>
            <person name="Whitfield E.J."/>
            <person name="Bayraktaroglu L."/>
            <person name="Berman B.P."/>
            <person name="Bettencourt B.R."/>
            <person name="Celniker S.E."/>
            <person name="de Grey A.D.N.J."/>
            <person name="Drysdale R.A."/>
            <person name="Harris N.L."/>
            <person name="Richter J."/>
            <person name="Russo S."/>
            <person name="Schroeder A.J."/>
            <person name="Shu S.Q."/>
            <person name="Stapleton M."/>
            <person name="Yamada C."/>
            <person name="Ashburner M."/>
            <person name="Gelbart W.M."/>
            <person name="Rubin G.M."/>
            <person name="Lewis S.E."/>
        </authorList>
    </citation>
    <scope>GENOME REANNOTATION</scope>
    <source>
        <strain evidence="10">Berkeley</strain>
    </source>
</reference>
<reference evidence="8" key="3">
    <citation type="journal article" date="2002" name="Genome Biol.">
        <title>A Drosophila full-length cDNA resource.</title>
        <authorList>
            <person name="Stapleton M."/>
            <person name="Carlson J.W."/>
            <person name="Brokstein P."/>
            <person name="Yu C."/>
            <person name="Champe M."/>
            <person name="George R.A."/>
            <person name="Guarin H."/>
            <person name="Kronmiller B."/>
            <person name="Pacleb J.M."/>
            <person name="Park S."/>
            <person name="Wan K.H."/>
            <person name="Rubin G.M."/>
            <person name="Celniker S.E."/>
        </authorList>
    </citation>
    <scope>NUCLEOTIDE SEQUENCE [LARGE SCALE MRNA] (ISOFORM A)</scope>
    <source>
        <strain evidence="8">Berkeley</strain>
        <tissue evidence="8">Testis</tissue>
    </source>
</reference>
<reference evidence="7" key="4">
    <citation type="journal article" date="2006" name="DNA Repair">
        <title>Drosophila homologs of FANCD2 and FANCL function in DNA repair.</title>
        <authorList>
            <person name="Marek L.R."/>
            <person name="Bale A.E."/>
        </authorList>
    </citation>
    <scope>FUNCTION</scope>
    <scope>CATALYTIC ACTIVITY</scope>
    <scope>PATHWAY</scope>
    <scope>DISRUPTION PHENOTYPE</scope>
</reference>
<reference evidence="7" key="5">
    <citation type="journal article" date="2014" name="Genetics">
        <title>Drosophila FANCM helicase prevents spontaneous mitotic crossovers generated by the MUS81 and SLX1 nucleases.</title>
        <authorList>
            <person name="Kuo H.K."/>
            <person name="McMahan S."/>
            <person name="Rota C.M."/>
            <person name="Kohl K.P."/>
            <person name="Sekelsky J."/>
        </authorList>
    </citation>
    <scope>FUNCTION</scope>
</reference>
<reference evidence="11" key="6">
    <citation type="journal article" date="2010" name="Nat. Struct. Mol. Biol.">
        <title>The structure of the catalytic subunit FANCL of the Fanconi anemia core complex.</title>
        <authorList>
            <person name="Cole A.R."/>
            <person name="Lewis L.P."/>
            <person name="Walden H."/>
        </authorList>
    </citation>
    <scope>X-RAY CRYSTALLOGRAPHY (3.20 ANGSTROMS) IN COMPLEX WITH ZN(2+)</scope>
    <scope>INTERACTION WITH FANCI AND FANCD2</scope>
</reference>
<name>FANCL_DROME</name>
<organism evidence="8">
    <name type="scientific">Drosophila melanogaster</name>
    <name type="common">Fruit fly</name>
    <dbReference type="NCBI Taxonomy" id="7227"/>
    <lineage>
        <taxon>Eukaryota</taxon>
        <taxon>Metazoa</taxon>
        <taxon>Ecdysozoa</taxon>
        <taxon>Arthropoda</taxon>
        <taxon>Hexapoda</taxon>
        <taxon>Insecta</taxon>
        <taxon>Pterygota</taxon>
        <taxon>Neoptera</taxon>
        <taxon>Endopterygota</taxon>
        <taxon>Diptera</taxon>
        <taxon>Brachycera</taxon>
        <taxon>Muscomorpha</taxon>
        <taxon>Ephydroidea</taxon>
        <taxon>Drosophilidae</taxon>
        <taxon>Drosophila</taxon>
        <taxon>Sophophora</taxon>
    </lineage>
</organism>
<accession>Q8T913</accession>
<accession>A0A0B4LH34</accession>
<accession>Q9VH34</accession>
<evidence type="ECO:0000255" key="1">
    <source>
        <dbReference type="PROSITE-ProRule" id="PRU00623"/>
    </source>
</evidence>
<evidence type="ECO:0000269" key="2">
    <source>
    </source>
</evidence>
<evidence type="ECO:0000269" key="3">
    <source>
    </source>
</evidence>
<evidence type="ECO:0000269" key="4">
    <source>
    </source>
</evidence>
<evidence type="ECO:0000303" key="5">
    <source>
    </source>
</evidence>
<evidence type="ECO:0000303" key="6">
    <source>
    </source>
</evidence>
<evidence type="ECO:0000305" key="7"/>
<evidence type="ECO:0000312" key="8">
    <source>
        <dbReference type="EMBL" id="AAL68044.1"/>
    </source>
</evidence>
<evidence type="ECO:0000312" key="9">
    <source>
        <dbReference type="FlyBase" id="FBgn0037781"/>
    </source>
</evidence>
<evidence type="ECO:0000312" key="10">
    <source>
        <dbReference type="Proteomes" id="UP000000803"/>
    </source>
</evidence>
<evidence type="ECO:0007744" key="11">
    <source>
        <dbReference type="PDB" id="3K1L"/>
    </source>
</evidence>
<evidence type="ECO:0007829" key="12">
    <source>
        <dbReference type="PDB" id="3K1L"/>
    </source>
</evidence>
<protein>
    <recommendedName>
        <fullName evidence="7">E3 ubiquitin-protein ligase Fancl</fullName>
        <ecNumber evidence="2">2.3.2.27</ecNumber>
    </recommendedName>
    <alternativeName>
        <fullName evidence="7">Fanconi anemia group L protein homolog</fullName>
    </alternativeName>
</protein>
<proteinExistence type="evidence at protein level"/>
<comment type="function">
    <text evidence="2 3 4">Ubiquitin ligase protein that mediates monoubiquitination of Fancd2 (PubMed:16860002). Ubiquitination of Fancd2 is stimulated by ionising radiation (PubMed:16860002). Together with Fancd2, and probably FANCI, involved in DNA repair of damage caused by agents that induce interstrand cross-links but not agents that cause double strand breaks (PubMed:16860002, PubMed:20154706, PubMed:25205745).</text>
</comment>
<comment type="catalytic activity">
    <reaction evidence="2">
        <text>S-ubiquitinyl-[E2 ubiquitin-conjugating enzyme]-L-cysteine + [acceptor protein]-L-lysine = [E2 ubiquitin-conjugating enzyme]-L-cysteine + N(6)-ubiquitinyl-[acceptor protein]-L-lysine.</text>
        <dbReference type="EC" id="2.3.2.27"/>
    </reaction>
</comment>
<comment type="pathway">
    <text evidence="2">Protein modification; protein ubiquitination.</text>
</comment>
<comment type="subunit">
    <text evidence="3">Interacts (via C-terminus) with FANCI and Fancd2.</text>
</comment>
<comment type="subcellular location">
    <subcellularLocation>
        <location evidence="7">Nucleus</location>
    </subcellularLocation>
</comment>
<comment type="alternative products">
    <event type="alternative splicing"/>
    <isoform>
        <id>Q8T913-1</id>
        <name evidence="9">A</name>
        <sequence type="displayed"/>
    </isoform>
    <isoform>
        <id>Q8T913-2</id>
        <name evidence="9">B</name>
        <sequence type="described" ref="VSP_062011"/>
    </isoform>
</comment>
<comment type="domain">
    <text evidence="3 6">Contains three UBC-type E2-like WD40 repeat-containing folds (PubMed:20154706). The 2nd and 3rd of these form the UBC-RWD (also known as the double-RWD or DRWD) region (PubMed:20154706). The UBC-RWD region may be involved in binding Fancd2 and FANCI (PubMed:20154706).</text>
</comment>
<comment type="disruption phenotype">
    <text evidence="2">RNAi-mediated knockdown gives no visible phenotype but increases sensitivity to DNA cross-linking mutagens.</text>
</comment>